<gene>
    <name type="primary">SCO2</name>
    <name type="ordered locus">YBR024W</name>
    <name type="ORF">YBR0308</name>
</gene>
<evidence type="ECO:0000250" key="1"/>
<evidence type="ECO:0000255" key="2"/>
<evidence type="ECO:0000255" key="3">
    <source>
        <dbReference type="PROSITE-ProRule" id="PRU00691"/>
    </source>
</evidence>
<evidence type="ECO:0000269" key="4">
    <source>
    </source>
</evidence>
<evidence type="ECO:0000305" key="5"/>
<dbReference type="EMBL" id="Z35893">
    <property type="protein sequence ID" value="CAA84966.1"/>
    <property type="molecule type" value="Genomic_DNA"/>
</dbReference>
<dbReference type="EMBL" id="X76078">
    <property type="protein sequence ID" value="CAA53681.1"/>
    <property type="molecule type" value="Genomic_DNA"/>
</dbReference>
<dbReference type="EMBL" id="BK006936">
    <property type="protein sequence ID" value="DAA07146.1"/>
    <property type="molecule type" value="Genomic_DNA"/>
</dbReference>
<dbReference type="PIR" id="S45880">
    <property type="entry name" value="S45880"/>
</dbReference>
<dbReference type="RefSeq" id="NP_009580.1">
    <property type="nucleotide sequence ID" value="NM_001178372.1"/>
</dbReference>
<dbReference type="SMR" id="P38072"/>
<dbReference type="BioGRID" id="32727">
    <property type="interactions" value="68"/>
</dbReference>
<dbReference type="DIP" id="DIP-3814N"/>
<dbReference type="FunCoup" id="P38072">
    <property type="interactions" value="648"/>
</dbReference>
<dbReference type="IntAct" id="P38072">
    <property type="interactions" value="1"/>
</dbReference>
<dbReference type="STRING" id="4932.YBR024W"/>
<dbReference type="iPTMnet" id="P38072"/>
<dbReference type="PaxDb" id="4932-YBR024W"/>
<dbReference type="PeptideAtlas" id="P38072"/>
<dbReference type="EnsemblFungi" id="YBR024W_mRNA">
    <property type="protein sequence ID" value="YBR024W"/>
    <property type="gene ID" value="YBR024W"/>
</dbReference>
<dbReference type="GeneID" id="852312"/>
<dbReference type="KEGG" id="sce:YBR024W"/>
<dbReference type="AGR" id="SGD:S000000228"/>
<dbReference type="SGD" id="S000000228">
    <property type="gene designation" value="SCO2"/>
</dbReference>
<dbReference type="VEuPathDB" id="FungiDB:YBR024W"/>
<dbReference type="eggNOG" id="KOG2792">
    <property type="taxonomic scope" value="Eukaryota"/>
</dbReference>
<dbReference type="GeneTree" id="ENSGT00390000004323"/>
<dbReference type="HOGENOM" id="CLU_050131_0_1_1"/>
<dbReference type="InParanoid" id="P38072"/>
<dbReference type="OMA" id="YYNRMKS"/>
<dbReference type="OrthoDB" id="270009at2759"/>
<dbReference type="BioCyc" id="YEAST:G3O-29004-MONOMER"/>
<dbReference type="BioGRID-ORCS" id="852312">
    <property type="hits" value="5 hits in 10 CRISPR screens"/>
</dbReference>
<dbReference type="PRO" id="PR:P38072"/>
<dbReference type="Proteomes" id="UP000002311">
    <property type="component" value="Chromosome II"/>
</dbReference>
<dbReference type="RNAct" id="P38072">
    <property type="molecule type" value="protein"/>
</dbReference>
<dbReference type="GO" id="GO:0005743">
    <property type="term" value="C:mitochondrial inner membrane"/>
    <property type="evidence" value="ECO:0007669"/>
    <property type="project" value="UniProtKB-SubCell"/>
</dbReference>
<dbReference type="GO" id="GO:0031966">
    <property type="term" value="C:mitochondrial membrane"/>
    <property type="evidence" value="ECO:0000314"/>
    <property type="project" value="SGD"/>
</dbReference>
<dbReference type="GO" id="GO:0005739">
    <property type="term" value="C:mitochondrion"/>
    <property type="evidence" value="ECO:0007005"/>
    <property type="project" value="SGD"/>
</dbReference>
<dbReference type="GO" id="GO:0016531">
    <property type="term" value="F:copper chaperone activity"/>
    <property type="evidence" value="ECO:0007669"/>
    <property type="project" value="InterPro"/>
</dbReference>
<dbReference type="GO" id="GO:0005507">
    <property type="term" value="F:copper ion binding"/>
    <property type="evidence" value="ECO:0000314"/>
    <property type="project" value="SGD"/>
</dbReference>
<dbReference type="GO" id="GO:0045454">
    <property type="term" value="P:cell redox homeostasis"/>
    <property type="evidence" value="ECO:0000316"/>
    <property type="project" value="SGD"/>
</dbReference>
<dbReference type="GO" id="GO:0034599">
    <property type="term" value="P:cellular response to oxidative stress"/>
    <property type="evidence" value="ECO:0000316"/>
    <property type="project" value="SGD"/>
</dbReference>
<dbReference type="GO" id="GO:0006878">
    <property type="term" value="P:intracellular copper ion homeostasis"/>
    <property type="evidence" value="ECO:0007669"/>
    <property type="project" value="InterPro"/>
</dbReference>
<dbReference type="GO" id="GO:0033617">
    <property type="term" value="P:mitochondrial cytochrome c oxidase assembly"/>
    <property type="evidence" value="ECO:0000318"/>
    <property type="project" value="GO_Central"/>
</dbReference>
<dbReference type="CDD" id="cd02968">
    <property type="entry name" value="SCO"/>
    <property type="match status" value="1"/>
</dbReference>
<dbReference type="FunFam" id="3.40.30.10:FF:000013">
    <property type="entry name" value="Blast:Protein SCO1 homolog, mitochondrial"/>
    <property type="match status" value="1"/>
</dbReference>
<dbReference type="Gene3D" id="3.40.30.10">
    <property type="entry name" value="Glutaredoxin"/>
    <property type="match status" value="1"/>
</dbReference>
<dbReference type="InterPro" id="IPR003782">
    <property type="entry name" value="SCO1/SenC"/>
</dbReference>
<dbReference type="InterPro" id="IPR017276">
    <property type="entry name" value="Synth_of_cyt-c-oxidase_Sco1/2"/>
</dbReference>
<dbReference type="InterPro" id="IPR036249">
    <property type="entry name" value="Thioredoxin-like_sf"/>
</dbReference>
<dbReference type="InterPro" id="IPR013766">
    <property type="entry name" value="Thioredoxin_domain"/>
</dbReference>
<dbReference type="PANTHER" id="PTHR12151:SF5">
    <property type="entry name" value="AT19154P"/>
    <property type="match status" value="1"/>
</dbReference>
<dbReference type="PANTHER" id="PTHR12151">
    <property type="entry name" value="ELECTRON TRANSPORT PROTIN SCO1/SENC FAMILY MEMBER"/>
    <property type="match status" value="1"/>
</dbReference>
<dbReference type="Pfam" id="PF02630">
    <property type="entry name" value="SCO1-SenC"/>
    <property type="match status" value="1"/>
</dbReference>
<dbReference type="PIRSF" id="PIRSF037736">
    <property type="entry name" value="SCO1"/>
    <property type="match status" value="1"/>
</dbReference>
<dbReference type="SUPFAM" id="SSF52833">
    <property type="entry name" value="Thioredoxin-like"/>
    <property type="match status" value="1"/>
</dbReference>
<dbReference type="PROSITE" id="PS51352">
    <property type="entry name" value="THIOREDOXIN_2"/>
    <property type="match status" value="1"/>
</dbReference>
<protein>
    <recommendedName>
        <fullName>Protein SCO2, mitochondrial</fullName>
    </recommendedName>
</protein>
<reference key="1">
    <citation type="journal article" date="1994" name="Yeast">
        <title>The complete sequence of a 33 kb fragment on the right arm of chromosome II from Saccharomyces cerevisiae reveals 16 open reading frames, including ten new open reading frames, five previously identified genes and a homologue of the SCO1 gene.</title>
        <authorList>
            <person name="Smits P.H.M."/>
            <person name="de Haan M."/>
            <person name="Maat C."/>
            <person name="Grivell L.A."/>
        </authorList>
    </citation>
    <scope>NUCLEOTIDE SEQUENCE [GENOMIC DNA]</scope>
    <source>
        <strain>ATCC 204508 / S288c</strain>
    </source>
</reference>
<reference key="2">
    <citation type="journal article" date="1994" name="EMBO J.">
        <title>Complete DNA sequence of yeast chromosome II.</title>
        <authorList>
            <person name="Feldmann H."/>
            <person name="Aigle M."/>
            <person name="Aljinovic G."/>
            <person name="Andre B."/>
            <person name="Baclet M.C."/>
            <person name="Barthe C."/>
            <person name="Baur A."/>
            <person name="Becam A.-M."/>
            <person name="Biteau N."/>
            <person name="Boles E."/>
            <person name="Brandt T."/>
            <person name="Brendel M."/>
            <person name="Brueckner M."/>
            <person name="Bussereau F."/>
            <person name="Christiansen C."/>
            <person name="Contreras R."/>
            <person name="Crouzet M."/>
            <person name="Cziepluch C."/>
            <person name="Demolis N."/>
            <person name="Delaveau T."/>
            <person name="Doignon F."/>
            <person name="Domdey H."/>
            <person name="Duesterhus S."/>
            <person name="Dubois E."/>
            <person name="Dujon B."/>
            <person name="El Bakkoury M."/>
            <person name="Entian K.-D."/>
            <person name="Feuermann M."/>
            <person name="Fiers W."/>
            <person name="Fobo G.M."/>
            <person name="Fritz C."/>
            <person name="Gassenhuber J."/>
            <person name="Glansdorff N."/>
            <person name="Goffeau A."/>
            <person name="Grivell L.A."/>
            <person name="de Haan M."/>
            <person name="Hein C."/>
            <person name="Herbert C.J."/>
            <person name="Hollenberg C.P."/>
            <person name="Holmstroem K."/>
            <person name="Jacq C."/>
            <person name="Jacquet M."/>
            <person name="Jauniaux J.-C."/>
            <person name="Jonniaux J.-L."/>
            <person name="Kallesoee T."/>
            <person name="Kiesau P."/>
            <person name="Kirchrath L."/>
            <person name="Koetter P."/>
            <person name="Korol S."/>
            <person name="Liebl S."/>
            <person name="Logghe M."/>
            <person name="Lohan A.J.E."/>
            <person name="Louis E.J."/>
            <person name="Li Z.Y."/>
            <person name="Maat M.J."/>
            <person name="Mallet L."/>
            <person name="Mannhaupt G."/>
            <person name="Messenguy F."/>
            <person name="Miosga T."/>
            <person name="Molemans F."/>
            <person name="Mueller S."/>
            <person name="Nasr F."/>
            <person name="Obermaier B."/>
            <person name="Perea J."/>
            <person name="Pierard A."/>
            <person name="Piravandi E."/>
            <person name="Pohl F.M."/>
            <person name="Pohl T.M."/>
            <person name="Potier S."/>
            <person name="Proft M."/>
            <person name="Purnelle B."/>
            <person name="Ramezani Rad M."/>
            <person name="Rieger M."/>
            <person name="Rose M."/>
            <person name="Schaaff-Gerstenschlaeger I."/>
            <person name="Scherens B."/>
            <person name="Schwarzlose C."/>
            <person name="Skala J."/>
            <person name="Slonimski P.P."/>
            <person name="Smits P.H.M."/>
            <person name="Souciet J.-L."/>
            <person name="Steensma H.Y."/>
            <person name="Stucka R."/>
            <person name="Urrestarazu L.A."/>
            <person name="van der Aart Q.J.M."/>
            <person name="Van Dyck L."/>
            <person name="Vassarotti A."/>
            <person name="Vetter I."/>
            <person name="Vierendeels F."/>
            <person name="Vissers S."/>
            <person name="Wagner G."/>
            <person name="de Wergifosse P."/>
            <person name="Wolfe K.H."/>
            <person name="Zagulski M."/>
            <person name="Zimmermann F.K."/>
            <person name="Mewes H.-W."/>
            <person name="Kleine K."/>
        </authorList>
    </citation>
    <scope>NUCLEOTIDE SEQUENCE [LARGE SCALE GENOMIC DNA]</scope>
    <source>
        <strain>ATCC 204508 / S288c</strain>
    </source>
</reference>
<reference key="3">
    <citation type="journal article" date="2014" name="G3 (Bethesda)">
        <title>The reference genome sequence of Saccharomyces cerevisiae: Then and now.</title>
        <authorList>
            <person name="Engel S.R."/>
            <person name="Dietrich F.S."/>
            <person name="Fisk D.G."/>
            <person name="Binkley G."/>
            <person name="Balakrishnan R."/>
            <person name="Costanzo M.C."/>
            <person name="Dwight S.S."/>
            <person name="Hitz B.C."/>
            <person name="Karra K."/>
            <person name="Nash R.S."/>
            <person name="Weng S."/>
            <person name="Wong E.D."/>
            <person name="Lloyd P."/>
            <person name="Skrzypek M.S."/>
            <person name="Miyasato S.R."/>
            <person name="Simison M."/>
            <person name="Cherry J.M."/>
        </authorList>
    </citation>
    <scope>GENOME REANNOTATION</scope>
    <source>
        <strain>ATCC 204508 / S288c</strain>
    </source>
</reference>
<reference key="4">
    <citation type="journal article" date="2003" name="Nature">
        <title>Global analysis of protein expression in yeast.</title>
        <authorList>
            <person name="Ghaemmaghami S."/>
            <person name="Huh W.-K."/>
            <person name="Bower K."/>
            <person name="Howson R.W."/>
            <person name="Belle A."/>
            <person name="Dephoure N."/>
            <person name="O'Shea E.K."/>
            <person name="Weissman J.S."/>
        </authorList>
    </citation>
    <scope>LEVEL OF PROTEIN EXPRESSION [LARGE SCALE ANALYSIS]</scope>
</reference>
<proteinExistence type="evidence at protein level"/>
<organism>
    <name type="scientific">Saccharomyces cerevisiae (strain ATCC 204508 / S288c)</name>
    <name type="common">Baker's yeast</name>
    <dbReference type="NCBI Taxonomy" id="559292"/>
    <lineage>
        <taxon>Eukaryota</taxon>
        <taxon>Fungi</taxon>
        <taxon>Dikarya</taxon>
        <taxon>Ascomycota</taxon>
        <taxon>Saccharomycotina</taxon>
        <taxon>Saccharomycetes</taxon>
        <taxon>Saccharomycetales</taxon>
        <taxon>Saccharomycetaceae</taxon>
        <taxon>Saccharomyces</taxon>
    </lineage>
</organism>
<feature type="transit peptide" description="Mitochondrion" evidence="2">
    <location>
        <begin position="1"/>
        <end status="unknown"/>
    </location>
</feature>
<feature type="chain" id="PRO_0000031924" description="Protein SCO2, mitochondrial">
    <location>
        <begin status="unknown"/>
        <end position="301"/>
    </location>
</feature>
<feature type="transmembrane region" description="Helical" evidence="2">
    <location>
        <begin position="82"/>
        <end position="98"/>
    </location>
</feature>
<feature type="domain" description="Thioredoxin" evidence="3">
    <location>
        <begin position="101"/>
        <end position="284"/>
    </location>
</feature>
<feature type="binding site" evidence="1">
    <location>
        <position position="154"/>
    </location>
    <ligand>
        <name>Cu cation</name>
        <dbReference type="ChEBI" id="CHEBI:23378"/>
    </ligand>
</feature>
<feature type="binding site" evidence="1">
    <location>
        <position position="158"/>
    </location>
    <ligand>
        <name>Cu cation</name>
        <dbReference type="ChEBI" id="CHEBI:23378"/>
    </ligand>
</feature>
<feature type="binding site" evidence="1">
    <location>
        <position position="245"/>
    </location>
    <ligand>
        <name>Cu cation</name>
        <dbReference type="ChEBI" id="CHEBI:23378"/>
    </ligand>
</feature>
<keyword id="KW-0143">Chaperone</keyword>
<keyword id="KW-0186">Copper</keyword>
<keyword id="KW-0472">Membrane</keyword>
<keyword id="KW-0479">Metal-binding</keyword>
<keyword id="KW-0496">Mitochondrion</keyword>
<keyword id="KW-0999">Mitochondrion inner membrane</keyword>
<keyword id="KW-1185">Reference proteome</keyword>
<keyword id="KW-0809">Transit peptide</keyword>
<keyword id="KW-0812">Transmembrane</keyword>
<keyword id="KW-1133">Transmembrane helix</keyword>
<comment type="function">
    <text>Acts as a copper chaperone, transporting copper to the Cu(A) site on the cytochrome c oxidase subunit II (COX2).</text>
</comment>
<comment type="subcellular location">
    <subcellularLocation>
        <location evidence="1">Mitochondrion inner membrane</location>
    </subcellularLocation>
</comment>
<comment type="miscellaneous">
    <text evidence="4">Present with 1480 molecules/cell in log phase SD medium.</text>
</comment>
<comment type="similarity">
    <text evidence="5">Belongs to the SCO1/2 family.</text>
</comment>
<sequence length="301" mass="34889">MLNSSRKYACRSLFRQANVSIKGLFYNGGAYRRGFSTGCCLRSDNKESPSARQPLDRLQLGDEINEPEPIRTRFFQFSRWKATIALLLLSGGTYAYLSRKRRLLETEKEADANRAYGSVALGGPFNLTDFNGKPFTEENLKGKFSILYFGFSHCPDICPEELDRLTYWISELDDKDHIKIQPLFISCDPARDTPDVLKEYLSDFHPAIIGLTGTYDQVKSVCKKYKVYFSTPRDVKPNQDYLVDHSIFFYLIDPEGQFIDALGRNYDEQSGLEKIREQIQAYVPKEERERRSKKWYSFIFN</sequence>
<name>SCO2_YEAST</name>
<accession>P38072</accession>
<accession>D6VQ26</accession>